<accession>B0U2D9</accession>
<keyword id="KW-0963">Cytoplasm</keyword>
<keyword id="KW-0238">DNA-binding</keyword>
<keyword id="KW-0804">Transcription</keyword>
<keyword id="KW-0805">Transcription regulation</keyword>
<protein>
    <recommendedName>
        <fullName evidence="1">Probable transcriptional regulatory protein Xfasm12_1059</fullName>
    </recommendedName>
</protein>
<evidence type="ECO:0000255" key="1">
    <source>
        <dbReference type="HAMAP-Rule" id="MF_00693"/>
    </source>
</evidence>
<sequence>MGRGPSIEARKNASDSKRGKIFTKIIRQIGVAARAGGGDPYNNPSLRVVIDKALASNMSKDVIERAIKKAIGEMEGVQYEEVRYEGYAPGGVAVIVDCLTDNRLRTVSDVRHAFSKCGGNMGAEGSVAFMFKRLGVLSYAHAIADEELITEAAIDAGAEDVMVYTQDDEIEVITTPEAFSRVKEEMAALGLMPYHAEITFRADSDIVVDGDTAIQVRKLLDILEDLDDVQDVYSNVDQVTLGKR</sequence>
<proteinExistence type="inferred from homology"/>
<gene>
    <name type="ordered locus">Xfasm12_1059</name>
</gene>
<comment type="subcellular location">
    <subcellularLocation>
        <location evidence="1">Cytoplasm</location>
    </subcellularLocation>
</comment>
<comment type="similarity">
    <text evidence="1">Belongs to the TACO1 family.</text>
</comment>
<dbReference type="EMBL" id="CP000941">
    <property type="protein sequence ID" value="ACA12018.1"/>
    <property type="molecule type" value="Genomic_DNA"/>
</dbReference>
<dbReference type="RefSeq" id="WP_004085427.1">
    <property type="nucleotide sequence ID" value="NC_010513.1"/>
</dbReference>
<dbReference type="SMR" id="B0U2D9"/>
<dbReference type="KEGG" id="xfm:Xfasm12_1059"/>
<dbReference type="HOGENOM" id="CLU_062974_2_2_6"/>
<dbReference type="GO" id="GO:0005829">
    <property type="term" value="C:cytosol"/>
    <property type="evidence" value="ECO:0007669"/>
    <property type="project" value="TreeGrafter"/>
</dbReference>
<dbReference type="GO" id="GO:0003677">
    <property type="term" value="F:DNA binding"/>
    <property type="evidence" value="ECO:0007669"/>
    <property type="project" value="UniProtKB-UniRule"/>
</dbReference>
<dbReference type="GO" id="GO:0006355">
    <property type="term" value="P:regulation of DNA-templated transcription"/>
    <property type="evidence" value="ECO:0007669"/>
    <property type="project" value="UniProtKB-UniRule"/>
</dbReference>
<dbReference type="FunFam" id="1.10.10.200:FF:000004">
    <property type="entry name" value="Probable transcriptional regulatory protein BSBG_02618"/>
    <property type="match status" value="1"/>
</dbReference>
<dbReference type="Gene3D" id="1.10.10.200">
    <property type="match status" value="1"/>
</dbReference>
<dbReference type="Gene3D" id="3.30.70.980">
    <property type="match status" value="2"/>
</dbReference>
<dbReference type="HAMAP" id="MF_00693">
    <property type="entry name" value="Transcrip_reg_TACO1"/>
    <property type="match status" value="1"/>
</dbReference>
<dbReference type="InterPro" id="IPR017856">
    <property type="entry name" value="Integrase-like_N"/>
</dbReference>
<dbReference type="InterPro" id="IPR048300">
    <property type="entry name" value="TACO1_YebC-like_2nd/3rd_dom"/>
</dbReference>
<dbReference type="InterPro" id="IPR049083">
    <property type="entry name" value="TACO1_YebC_N"/>
</dbReference>
<dbReference type="InterPro" id="IPR002876">
    <property type="entry name" value="Transcrip_reg_TACO1-like"/>
</dbReference>
<dbReference type="InterPro" id="IPR026564">
    <property type="entry name" value="Transcrip_reg_TACO1-like_dom3"/>
</dbReference>
<dbReference type="InterPro" id="IPR029072">
    <property type="entry name" value="YebC-like"/>
</dbReference>
<dbReference type="NCBIfam" id="NF001030">
    <property type="entry name" value="PRK00110.1"/>
    <property type="match status" value="1"/>
</dbReference>
<dbReference type="NCBIfam" id="NF009044">
    <property type="entry name" value="PRK12378.1"/>
    <property type="match status" value="1"/>
</dbReference>
<dbReference type="NCBIfam" id="TIGR01033">
    <property type="entry name" value="YebC/PmpR family DNA-binding transcriptional regulator"/>
    <property type="match status" value="1"/>
</dbReference>
<dbReference type="PANTHER" id="PTHR12532:SF6">
    <property type="entry name" value="TRANSCRIPTIONAL REGULATORY PROTEIN YEBC-RELATED"/>
    <property type="match status" value="1"/>
</dbReference>
<dbReference type="PANTHER" id="PTHR12532">
    <property type="entry name" value="TRANSLATIONAL ACTIVATOR OF CYTOCHROME C OXIDASE 1"/>
    <property type="match status" value="1"/>
</dbReference>
<dbReference type="Pfam" id="PF20772">
    <property type="entry name" value="TACO1_YebC_N"/>
    <property type="match status" value="1"/>
</dbReference>
<dbReference type="Pfam" id="PF01709">
    <property type="entry name" value="Transcrip_reg"/>
    <property type="match status" value="1"/>
</dbReference>
<dbReference type="SUPFAM" id="SSF75625">
    <property type="entry name" value="YebC-like"/>
    <property type="match status" value="1"/>
</dbReference>
<feature type="chain" id="PRO_1000132260" description="Probable transcriptional regulatory protein Xfasm12_1059">
    <location>
        <begin position="1"/>
        <end position="244"/>
    </location>
</feature>
<name>Y1059_XYLFM</name>
<organism>
    <name type="scientific">Xylella fastidiosa (strain M12)</name>
    <dbReference type="NCBI Taxonomy" id="405440"/>
    <lineage>
        <taxon>Bacteria</taxon>
        <taxon>Pseudomonadati</taxon>
        <taxon>Pseudomonadota</taxon>
        <taxon>Gammaproteobacteria</taxon>
        <taxon>Lysobacterales</taxon>
        <taxon>Lysobacteraceae</taxon>
        <taxon>Xylella</taxon>
    </lineage>
</organism>
<reference key="1">
    <citation type="journal article" date="2010" name="J. Bacteriol.">
        <title>Whole genome sequences of two Xylella fastidiosa strains (M12 and M23) causing almond leaf scorch disease in California.</title>
        <authorList>
            <person name="Chen J."/>
            <person name="Xie G."/>
            <person name="Han S."/>
            <person name="Chertkov O."/>
            <person name="Sims D."/>
            <person name="Civerolo E.L."/>
        </authorList>
    </citation>
    <scope>NUCLEOTIDE SEQUENCE [LARGE SCALE GENOMIC DNA]</scope>
    <source>
        <strain>M12</strain>
    </source>
</reference>